<proteinExistence type="evidence at transcript level"/>
<reference key="1">
    <citation type="journal article" date="1988" name="J. Biol. Chem.">
        <title>The expression of a functional cDNA encoding the chicken cytochrome P-450arom (aromatase) that catalyzes the formation of estrogen from androgen.</title>
        <authorList>
            <person name="McPhaul M.J."/>
            <person name="Noble J.F."/>
            <person name="Simpson E.R."/>
            <person name="Mendelson C.R."/>
            <person name="Wilson J.D."/>
        </authorList>
    </citation>
    <scope>NUCLEOTIDE SEQUENCE [MRNA]</scope>
    <source>
        <tissue>Ovary</tissue>
    </source>
</reference>
<reference key="2">
    <citation type="journal article" date="1996" name="J. Reprod. Dev.">
        <title>Comparison of 5' upstream regions of chicken and quail aromatase genes.</title>
        <authorList>
            <person name="Kudo T."/>
            <person name="Yamamoto H."/>
            <person name="Sato S."/>
            <person name="Sutou S."/>
        </authorList>
    </citation>
    <scope>NUCLEOTIDE SEQUENCE OF 1-47</scope>
    <source>
        <strain>Leghorn</strain>
        <tissue>Liver</tissue>
    </source>
</reference>
<accession>P19098</accession>
<name>CP19A_CHICK</name>
<organism>
    <name type="scientific">Gallus gallus</name>
    <name type="common">Chicken</name>
    <dbReference type="NCBI Taxonomy" id="9031"/>
    <lineage>
        <taxon>Eukaryota</taxon>
        <taxon>Metazoa</taxon>
        <taxon>Chordata</taxon>
        <taxon>Craniata</taxon>
        <taxon>Vertebrata</taxon>
        <taxon>Euteleostomi</taxon>
        <taxon>Archelosauria</taxon>
        <taxon>Archosauria</taxon>
        <taxon>Dinosauria</taxon>
        <taxon>Saurischia</taxon>
        <taxon>Theropoda</taxon>
        <taxon>Coelurosauria</taxon>
        <taxon>Aves</taxon>
        <taxon>Neognathae</taxon>
        <taxon>Galloanserae</taxon>
        <taxon>Galliformes</taxon>
        <taxon>Phasianidae</taxon>
        <taxon>Phasianinae</taxon>
        <taxon>Gallus</taxon>
    </lineage>
</organism>
<comment type="function">
    <text>Catalyzes the formation of aromatic C18 estrogens from C19 androgens.</text>
</comment>
<comment type="catalytic activity">
    <reaction evidence="2">
        <text>testosterone + 3 reduced [NADPH--hemoprotein reductase] + 3 O2 = 17beta-estradiol + formate + 3 oxidized [NADPH--hemoprotein reductase] + 4 H2O + 4 H(+)</text>
        <dbReference type="Rhea" id="RHEA:38191"/>
        <dbReference type="Rhea" id="RHEA-COMP:11964"/>
        <dbReference type="Rhea" id="RHEA-COMP:11965"/>
        <dbReference type="ChEBI" id="CHEBI:15377"/>
        <dbReference type="ChEBI" id="CHEBI:15378"/>
        <dbReference type="ChEBI" id="CHEBI:15379"/>
        <dbReference type="ChEBI" id="CHEBI:15740"/>
        <dbReference type="ChEBI" id="CHEBI:16469"/>
        <dbReference type="ChEBI" id="CHEBI:17347"/>
        <dbReference type="ChEBI" id="CHEBI:57618"/>
        <dbReference type="ChEBI" id="CHEBI:58210"/>
        <dbReference type="EC" id="1.14.14.14"/>
    </reaction>
</comment>
<comment type="catalytic activity">
    <reaction evidence="2">
        <text>androst-4-ene-3,17-dione + 3 reduced [NADPH--hemoprotein reductase] + 3 O2 = estrone + formate + 3 oxidized [NADPH--hemoprotein reductase] + 4 H2O + 4 H(+)</text>
        <dbReference type="Rhea" id="RHEA:38195"/>
        <dbReference type="Rhea" id="RHEA-COMP:11964"/>
        <dbReference type="Rhea" id="RHEA-COMP:11965"/>
        <dbReference type="ChEBI" id="CHEBI:15377"/>
        <dbReference type="ChEBI" id="CHEBI:15378"/>
        <dbReference type="ChEBI" id="CHEBI:15379"/>
        <dbReference type="ChEBI" id="CHEBI:15740"/>
        <dbReference type="ChEBI" id="CHEBI:16422"/>
        <dbReference type="ChEBI" id="CHEBI:17263"/>
        <dbReference type="ChEBI" id="CHEBI:57618"/>
        <dbReference type="ChEBI" id="CHEBI:58210"/>
        <dbReference type="EC" id="1.14.14.14"/>
    </reaction>
</comment>
<comment type="cofactor">
    <cofactor evidence="1">
        <name>heme</name>
        <dbReference type="ChEBI" id="CHEBI:30413"/>
    </cofactor>
</comment>
<comment type="subcellular location">
    <subcellularLocation>
        <location>Membrane</location>
        <topology>Peripheral membrane protein</topology>
    </subcellularLocation>
</comment>
<comment type="similarity">
    <text evidence="3">Belongs to the cytochrome P450 family.</text>
</comment>
<comment type="sequence caution" evidence="3">
    <conflict type="erroneous initiation">
        <sequence resource="EMBL-CDS" id="AAA48739"/>
    </conflict>
</comment>
<gene>
    <name type="primary">CYP19A1</name>
    <name type="synonym">AROM</name>
    <name type="synonym">CYP19</name>
</gene>
<evidence type="ECO:0000250" key="1"/>
<evidence type="ECO:0000250" key="2">
    <source>
        <dbReference type="UniProtKB" id="P11511"/>
    </source>
</evidence>
<evidence type="ECO:0000305" key="3"/>
<dbReference type="EC" id="1.14.14.14" evidence="2"/>
<dbReference type="EMBL" id="J04047">
    <property type="protein sequence ID" value="AAA48738.1"/>
    <property type="molecule type" value="mRNA"/>
</dbReference>
<dbReference type="EMBL" id="J04047">
    <property type="protein sequence ID" value="AAA48739.1"/>
    <property type="status" value="ALT_INIT"/>
    <property type="molecule type" value="mRNA"/>
</dbReference>
<dbReference type="EMBL" id="D50335">
    <property type="protein sequence ID" value="BAA08871.1"/>
    <property type="molecule type" value="Genomic_DNA"/>
</dbReference>
<dbReference type="PIR" id="A31916">
    <property type="entry name" value="A31916"/>
</dbReference>
<dbReference type="SMR" id="P19098"/>
<dbReference type="FunCoup" id="P19098">
    <property type="interactions" value="22"/>
</dbReference>
<dbReference type="STRING" id="9031.ENSGALP00000066452"/>
<dbReference type="PaxDb" id="9031-ENSGALP00000038215"/>
<dbReference type="VEuPathDB" id="HostDB:geneid_414854"/>
<dbReference type="eggNOG" id="KOG0157">
    <property type="taxonomic scope" value="Eukaryota"/>
</dbReference>
<dbReference type="InParanoid" id="P19098"/>
<dbReference type="OrthoDB" id="8397025at2759"/>
<dbReference type="PhylomeDB" id="P19098"/>
<dbReference type="Proteomes" id="UP000000539">
    <property type="component" value="Unassembled WGS sequence"/>
</dbReference>
<dbReference type="GO" id="GO:0005783">
    <property type="term" value="C:endoplasmic reticulum"/>
    <property type="evidence" value="ECO:0000318"/>
    <property type="project" value="GO_Central"/>
</dbReference>
<dbReference type="GO" id="GO:0016020">
    <property type="term" value="C:membrane"/>
    <property type="evidence" value="ECO:0007669"/>
    <property type="project" value="UniProtKB-SubCell"/>
</dbReference>
<dbReference type="GO" id="GO:0070330">
    <property type="term" value="F:aromatase activity"/>
    <property type="evidence" value="ECO:0000318"/>
    <property type="project" value="GO_Central"/>
</dbReference>
<dbReference type="GO" id="GO:0020037">
    <property type="term" value="F:heme binding"/>
    <property type="evidence" value="ECO:0007669"/>
    <property type="project" value="InterPro"/>
</dbReference>
<dbReference type="GO" id="GO:0005506">
    <property type="term" value="F:iron ion binding"/>
    <property type="evidence" value="ECO:0007669"/>
    <property type="project" value="InterPro"/>
</dbReference>
<dbReference type="GO" id="GO:0008585">
    <property type="term" value="P:female gonad development"/>
    <property type="evidence" value="ECO:0000270"/>
    <property type="project" value="AgBase"/>
</dbReference>
<dbReference type="GO" id="GO:0006629">
    <property type="term" value="P:lipid metabolic process"/>
    <property type="evidence" value="ECO:0007669"/>
    <property type="project" value="UniProtKB-KW"/>
</dbReference>
<dbReference type="GO" id="GO:0032355">
    <property type="term" value="P:response to estradiol"/>
    <property type="evidence" value="ECO:0000318"/>
    <property type="project" value="GO_Central"/>
</dbReference>
<dbReference type="CDD" id="cd20616">
    <property type="entry name" value="CYP19A1"/>
    <property type="match status" value="1"/>
</dbReference>
<dbReference type="FunFam" id="1.10.630.10:FF:000032">
    <property type="entry name" value="Cytochrome P450 aromatase"/>
    <property type="match status" value="1"/>
</dbReference>
<dbReference type="Gene3D" id="1.10.630.10">
    <property type="entry name" value="Cytochrome P450"/>
    <property type="match status" value="1"/>
</dbReference>
<dbReference type="InterPro" id="IPR001128">
    <property type="entry name" value="Cyt_P450"/>
</dbReference>
<dbReference type="InterPro" id="IPR017972">
    <property type="entry name" value="Cyt_P450_CS"/>
</dbReference>
<dbReference type="InterPro" id="IPR002401">
    <property type="entry name" value="Cyt_P450_E_grp-I"/>
</dbReference>
<dbReference type="InterPro" id="IPR036396">
    <property type="entry name" value="Cyt_P450_sf"/>
</dbReference>
<dbReference type="InterPro" id="IPR050196">
    <property type="entry name" value="Cytochrome_P450_Monoox"/>
</dbReference>
<dbReference type="PANTHER" id="PTHR24291:SF43">
    <property type="entry name" value="AROMATASE"/>
    <property type="match status" value="1"/>
</dbReference>
<dbReference type="PANTHER" id="PTHR24291">
    <property type="entry name" value="CYTOCHROME P450 FAMILY 4"/>
    <property type="match status" value="1"/>
</dbReference>
<dbReference type="Pfam" id="PF00067">
    <property type="entry name" value="p450"/>
    <property type="match status" value="1"/>
</dbReference>
<dbReference type="PRINTS" id="PR00463">
    <property type="entry name" value="EP450I"/>
</dbReference>
<dbReference type="PRINTS" id="PR00385">
    <property type="entry name" value="P450"/>
</dbReference>
<dbReference type="SUPFAM" id="SSF48264">
    <property type="entry name" value="Cytochrome P450"/>
    <property type="match status" value="1"/>
</dbReference>
<dbReference type="PROSITE" id="PS00086">
    <property type="entry name" value="CYTOCHROME_P450"/>
    <property type="match status" value="1"/>
</dbReference>
<keyword id="KW-0349">Heme</keyword>
<keyword id="KW-0408">Iron</keyword>
<keyword id="KW-0443">Lipid metabolism</keyword>
<keyword id="KW-0472">Membrane</keyword>
<keyword id="KW-0479">Metal-binding</keyword>
<keyword id="KW-0503">Monooxygenase</keyword>
<keyword id="KW-0560">Oxidoreductase</keyword>
<keyword id="KW-1185">Reference proteome</keyword>
<protein>
    <recommendedName>
        <fullName>Aromatase</fullName>
        <ecNumber evidence="2">1.14.14.14</ecNumber>
    </recommendedName>
    <alternativeName>
        <fullName>CYPXIX</fullName>
    </alternativeName>
    <alternativeName>
        <fullName>Cytochrome P-450AROM</fullName>
    </alternativeName>
    <alternativeName>
        <fullName>Cytochrome P450 19A1</fullName>
    </alternativeName>
    <alternativeName>
        <fullName>Estrogen synthase</fullName>
    </alternativeName>
</protein>
<sequence>MIPETLNPLNYFTSLVPDLMPVATVPIIILICFLFLIWNHEETSSIPGPGYCMGIGPLISHGRFLWMGVGNACNYYNKTYGEFVRVWISGEETFIISKSSSVFHVMKHWNYVSRFGSKLGLQCIGMYENGIIFNNNPAHWKEIRPFFTKALSGPGLVRMIAICVESTIVHLDKLEEVTTEVGNVNVLNLMRRIMLDTSNKLFLGVPLDESAIVLKIQNYFDAWQALLLKPDIFFKISWLCKKYEEAAKDLKGAMEILIEQKRQKLSTVEKLDEHMDFASQLIFAQNRGDLTAENVNQCVLEMMIAAPDTLSVTLFIMLILIADDPTVEEKMMREIETVMGDREVQSDDMPNLKIVENFIYESMRYQPVVDLIMRKALQDDVIDGYPVKKGTNIILNIGRMHKLEFFPKPNEFSLENFEKNVPSRYFQPFGFGPRGCVGKFIAMVMMKAILVTLLRRCRVQTMKGRGLNNIQKNNDLSMHPIERQPLLEMVFTQEAQTRIRVTKVDQH</sequence>
<feature type="chain" id="PRO_0000051964" description="Aromatase">
    <location>
        <begin position="1"/>
        <end position="507"/>
    </location>
</feature>
<feature type="binding site" description="axial binding residue">
    <location>
        <position position="436"/>
    </location>
    <ligand>
        <name>heme</name>
        <dbReference type="ChEBI" id="CHEBI:30413"/>
    </ligand>
    <ligandPart>
        <name>Fe</name>
        <dbReference type="ChEBI" id="CHEBI:18248"/>
    </ligandPart>
</feature>